<name>CK5P3_HUMAN</name>
<keyword id="KW-0002">3D-structure</keyword>
<keyword id="KW-0025">Alternative splicing</keyword>
<keyword id="KW-0963">Cytoplasm</keyword>
<keyword id="KW-0206">Cytoskeleton</keyword>
<keyword id="KW-0256">Endoplasmic reticulum</keyword>
<keyword id="KW-0945">Host-virus interaction</keyword>
<keyword id="KW-1017">Isopeptide bond</keyword>
<keyword id="KW-0472">Membrane</keyword>
<keyword id="KW-0539">Nucleus</keyword>
<keyword id="KW-0597">Phosphoprotein</keyword>
<keyword id="KW-1267">Proteomics identification</keyword>
<keyword id="KW-1185">Reference proteome</keyword>
<keyword id="KW-0832">Ubl conjugation</keyword>
<keyword id="KW-0833">Ubl conjugation pathway</keyword>
<reference key="1">
    <citation type="journal article" date="2002" name="Biochem. Biophys. Res. Commun.">
        <title>A novel gene IC53 stimulates ECV304 cell proliferation and is upregulated in failing heart.</title>
        <authorList>
            <person name="Chen J."/>
            <person name="Liu B."/>
            <person name="Liu Y.Q."/>
            <person name="Han Y."/>
            <person name="Yu H."/>
            <person name="Zhang Y."/>
            <person name="Lu L."/>
            <person name="Zhen Y."/>
            <person name="Hui R.T."/>
        </authorList>
    </citation>
    <scope>NUCLEOTIDE SEQUENCE [MRNA] (ISOFORM 2)</scope>
    <scope>TISSUE SPECIFICITY</scope>
    <source>
        <tissue>Aorta</tissue>
    </source>
</reference>
<reference key="2">
    <citation type="journal article" date="2003" name="Cell Res.">
        <title>Cloning and characterization of human IC53-2, a novel CDK5 activator binding protein.</title>
        <authorList>
            <person name="Xie Y.H."/>
            <person name="He X.H."/>
            <person name="Tang Y.T."/>
            <person name="Li J.J."/>
            <person name="Pan Z.M."/>
            <person name="Qin W.X."/>
            <person name="Wan da F."/>
            <person name="Gu J.R."/>
        </authorList>
    </citation>
    <scope>NUCLEOTIDE SEQUENCE [MRNA] (ISOFORM 3)</scope>
    <scope>INTERACTION WITH CDK5R1</scope>
    <scope>TISSUE SPECIFICITY</scope>
    <source>
        <tissue>Placenta</tissue>
    </source>
</reference>
<reference key="3">
    <citation type="submission" date="2001-01" db="EMBL/GenBank/DDBJ databases">
        <title>Protein interacting with the receptor binding domain of enteric adenovirus serotype 41 fiber protein.</title>
        <authorList>
            <person name="Favier A.-L."/>
            <person name="Harsi C."/>
            <person name="Chrobozcek J."/>
        </authorList>
    </citation>
    <scope>NUCLEOTIDE SEQUENCE [MRNA] (ISOFORM 1)</scope>
    <source>
        <tissue>Kidney</tissue>
    </source>
</reference>
<reference key="4">
    <citation type="submission" date="2001-05" db="EMBL/GenBank/DDBJ databases">
        <title>Identification of immuno-peptidmics that are recognized by tumor-reactive CTL generated from TIL of colon cancer patients.</title>
        <authorList>
            <person name="Shichijo S."/>
            <person name="Itoh K."/>
        </authorList>
    </citation>
    <scope>NUCLEOTIDE SEQUENCE [LARGE SCALE MRNA] (ISOFORM 1)</scope>
    <source>
        <tissue>Colon adenocarcinoma</tissue>
    </source>
</reference>
<reference key="5">
    <citation type="journal article" date="2004" name="Nat. Genet.">
        <title>Complete sequencing and characterization of 21,243 full-length human cDNAs.</title>
        <authorList>
            <person name="Ota T."/>
            <person name="Suzuki Y."/>
            <person name="Nishikawa T."/>
            <person name="Otsuki T."/>
            <person name="Sugiyama T."/>
            <person name="Irie R."/>
            <person name="Wakamatsu A."/>
            <person name="Hayashi K."/>
            <person name="Sato H."/>
            <person name="Nagai K."/>
            <person name="Kimura K."/>
            <person name="Makita H."/>
            <person name="Sekine M."/>
            <person name="Obayashi M."/>
            <person name="Nishi T."/>
            <person name="Shibahara T."/>
            <person name="Tanaka T."/>
            <person name="Ishii S."/>
            <person name="Yamamoto J."/>
            <person name="Saito K."/>
            <person name="Kawai Y."/>
            <person name="Isono Y."/>
            <person name="Nakamura Y."/>
            <person name="Nagahari K."/>
            <person name="Murakami K."/>
            <person name="Yasuda T."/>
            <person name="Iwayanagi T."/>
            <person name="Wagatsuma M."/>
            <person name="Shiratori A."/>
            <person name="Sudo H."/>
            <person name="Hosoiri T."/>
            <person name="Kaku Y."/>
            <person name="Kodaira H."/>
            <person name="Kondo H."/>
            <person name="Sugawara M."/>
            <person name="Takahashi M."/>
            <person name="Kanda K."/>
            <person name="Yokoi T."/>
            <person name="Furuya T."/>
            <person name="Kikkawa E."/>
            <person name="Omura Y."/>
            <person name="Abe K."/>
            <person name="Kamihara K."/>
            <person name="Katsuta N."/>
            <person name="Sato K."/>
            <person name="Tanikawa M."/>
            <person name="Yamazaki M."/>
            <person name="Ninomiya K."/>
            <person name="Ishibashi T."/>
            <person name="Yamashita H."/>
            <person name="Murakawa K."/>
            <person name="Fujimori K."/>
            <person name="Tanai H."/>
            <person name="Kimata M."/>
            <person name="Watanabe M."/>
            <person name="Hiraoka S."/>
            <person name="Chiba Y."/>
            <person name="Ishida S."/>
            <person name="Ono Y."/>
            <person name="Takiguchi S."/>
            <person name="Watanabe S."/>
            <person name="Yosida M."/>
            <person name="Hotuta T."/>
            <person name="Kusano J."/>
            <person name="Kanehori K."/>
            <person name="Takahashi-Fujii A."/>
            <person name="Hara H."/>
            <person name="Tanase T.-O."/>
            <person name="Nomura Y."/>
            <person name="Togiya S."/>
            <person name="Komai F."/>
            <person name="Hara R."/>
            <person name="Takeuchi K."/>
            <person name="Arita M."/>
            <person name="Imose N."/>
            <person name="Musashino K."/>
            <person name="Yuuki H."/>
            <person name="Oshima A."/>
            <person name="Sasaki N."/>
            <person name="Aotsuka S."/>
            <person name="Yoshikawa Y."/>
            <person name="Matsunawa H."/>
            <person name="Ichihara T."/>
            <person name="Shiohata N."/>
            <person name="Sano S."/>
            <person name="Moriya S."/>
            <person name="Momiyama H."/>
            <person name="Satoh N."/>
            <person name="Takami S."/>
            <person name="Terashima Y."/>
            <person name="Suzuki O."/>
            <person name="Nakagawa S."/>
            <person name="Senoh A."/>
            <person name="Mizoguchi H."/>
            <person name="Goto Y."/>
            <person name="Shimizu F."/>
            <person name="Wakebe H."/>
            <person name="Hishigaki H."/>
            <person name="Watanabe T."/>
            <person name="Sugiyama A."/>
            <person name="Takemoto M."/>
            <person name="Kawakami B."/>
            <person name="Yamazaki M."/>
            <person name="Watanabe K."/>
            <person name="Kumagai A."/>
            <person name="Itakura S."/>
            <person name="Fukuzumi Y."/>
            <person name="Fujimori Y."/>
            <person name="Komiyama M."/>
            <person name="Tashiro H."/>
            <person name="Tanigami A."/>
            <person name="Fujiwara T."/>
            <person name="Ono T."/>
            <person name="Yamada K."/>
            <person name="Fujii Y."/>
            <person name="Ozaki K."/>
            <person name="Hirao M."/>
            <person name="Ohmori Y."/>
            <person name="Kawabata A."/>
            <person name="Hikiji T."/>
            <person name="Kobatake N."/>
            <person name="Inagaki H."/>
            <person name="Ikema Y."/>
            <person name="Okamoto S."/>
            <person name="Okitani R."/>
            <person name="Kawakami T."/>
            <person name="Noguchi S."/>
            <person name="Itoh T."/>
            <person name="Shigeta K."/>
            <person name="Senba T."/>
            <person name="Matsumura K."/>
            <person name="Nakajima Y."/>
            <person name="Mizuno T."/>
            <person name="Morinaga M."/>
            <person name="Sasaki M."/>
            <person name="Togashi T."/>
            <person name="Oyama M."/>
            <person name="Hata H."/>
            <person name="Watanabe M."/>
            <person name="Komatsu T."/>
            <person name="Mizushima-Sugano J."/>
            <person name="Satoh T."/>
            <person name="Shirai Y."/>
            <person name="Takahashi Y."/>
            <person name="Nakagawa K."/>
            <person name="Okumura K."/>
            <person name="Nagase T."/>
            <person name="Nomura N."/>
            <person name="Kikuchi H."/>
            <person name="Masuho Y."/>
            <person name="Yamashita R."/>
            <person name="Nakai K."/>
            <person name="Yada T."/>
            <person name="Nakamura Y."/>
            <person name="Ohara O."/>
            <person name="Isogai T."/>
            <person name="Sugano S."/>
        </authorList>
    </citation>
    <scope>NUCLEOTIDE SEQUENCE [LARGE SCALE MRNA] (ISOFORMS 1 AND 4)</scope>
    <source>
        <tissue>Placenta</tissue>
        <tissue>Rectum</tissue>
    </source>
</reference>
<reference key="6">
    <citation type="submission" date="2005-04" db="EMBL/GenBank/DDBJ databases">
        <authorList>
            <person name="Totoki Y."/>
            <person name="Toyoda A."/>
            <person name="Takeda T."/>
            <person name="Sakaki Y."/>
            <person name="Tanaka A."/>
            <person name="Yokoyama S."/>
        </authorList>
    </citation>
    <scope>NUCLEOTIDE SEQUENCE [LARGE SCALE MRNA] (ISOFORM 1)</scope>
    <source>
        <tissue>Synovial cell</tissue>
    </source>
</reference>
<reference key="7">
    <citation type="submission" date="2005-09" db="EMBL/GenBank/DDBJ databases">
        <authorList>
            <person name="Mural R.J."/>
            <person name="Istrail S."/>
            <person name="Sutton G.G."/>
            <person name="Florea L."/>
            <person name="Halpern A.L."/>
            <person name="Mobarry C.M."/>
            <person name="Lippert R."/>
            <person name="Walenz B."/>
            <person name="Shatkay H."/>
            <person name="Dew I."/>
            <person name="Miller J.R."/>
            <person name="Flanigan M.J."/>
            <person name="Edwards N.J."/>
            <person name="Bolanos R."/>
            <person name="Fasulo D."/>
            <person name="Halldorsson B.V."/>
            <person name="Hannenhalli S."/>
            <person name="Turner R."/>
            <person name="Yooseph S."/>
            <person name="Lu F."/>
            <person name="Nusskern D.R."/>
            <person name="Shue B.C."/>
            <person name="Zheng X.H."/>
            <person name="Zhong F."/>
            <person name="Delcher A.L."/>
            <person name="Huson D.H."/>
            <person name="Kravitz S.A."/>
            <person name="Mouchard L."/>
            <person name="Reinert K."/>
            <person name="Remington K.A."/>
            <person name="Clark A.G."/>
            <person name="Waterman M.S."/>
            <person name="Eichler E.E."/>
            <person name="Adams M.D."/>
            <person name="Hunkapiller M.W."/>
            <person name="Myers E.W."/>
            <person name="Venter J.C."/>
        </authorList>
    </citation>
    <scope>NUCLEOTIDE SEQUENCE [LARGE SCALE GENOMIC DNA]</scope>
</reference>
<reference key="8">
    <citation type="journal article" date="2006" name="Nature">
        <title>DNA sequence of human chromosome 17 and analysis of rearrangement in the human lineage.</title>
        <authorList>
            <person name="Zody M.C."/>
            <person name="Garber M."/>
            <person name="Adams D.J."/>
            <person name="Sharpe T."/>
            <person name="Harrow J."/>
            <person name="Lupski J.R."/>
            <person name="Nicholson C."/>
            <person name="Searle S.M."/>
            <person name="Wilming L."/>
            <person name="Young S.K."/>
            <person name="Abouelleil A."/>
            <person name="Allen N.R."/>
            <person name="Bi W."/>
            <person name="Bloom T."/>
            <person name="Borowsky M.L."/>
            <person name="Bugalter B.E."/>
            <person name="Butler J."/>
            <person name="Chang J.L."/>
            <person name="Chen C.-K."/>
            <person name="Cook A."/>
            <person name="Corum B."/>
            <person name="Cuomo C.A."/>
            <person name="de Jong P.J."/>
            <person name="DeCaprio D."/>
            <person name="Dewar K."/>
            <person name="FitzGerald M."/>
            <person name="Gilbert J."/>
            <person name="Gibson R."/>
            <person name="Gnerre S."/>
            <person name="Goldstein S."/>
            <person name="Grafham D.V."/>
            <person name="Grocock R."/>
            <person name="Hafez N."/>
            <person name="Hagopian D.S."/>
            <person name="Hart E."/>
            <person name="Norman C.H."/>
            <person name="Humphray S."/>
            <person name="Jaffe D.B."/>
            <person name="Jones M."/>
            <person name="Kamal M."/>
            <person name="Khodiyar V.K."/>
            <person name="LaButti K."/>
            <person name="Laird G."/>
            <person name="Lehoczky J."/>
            <person name="Liu X."/>
            <person name="Lokyitsang T."/>
            <person name="Loveland J."/>
            <person name="Lui A."/>
            <person name="Macdonald P."/>
            <person name="Major J.E."/>
            <person name="Matthews L."/>
            <person name="Mauceli E."/>
            <person name="McCarroll S.A."/>
            <person name="Mihalev A.H."/>
            <person name="Mudge J."/>
            <person name="Nguyen C."/>
            <person name="Nicol R."/>
            <person name="O'Leary S.B."/>
            <person name="Osoegawa K."/>
            <person name="Schwartz D.C."/>
            <person name="Shaw-Smith C."/>
            <person name="Stankiewicz P."/>
            <person name="Steward C."/>
            <person name="Swarbreck D."/>
            <person name="Venkataraman V."/>
            <person name="Whittaker C.A."/>
            <person name="Yang X."/>
            <person name="Zimmer A.R."/>
            <person name="Bradley A."/>
            <person name="Hubbard T."/>
            <person name="Birren B.W."/>
            <person name="Rogers J."/>
            <person name="Lander E.S."/>
            <person name="Nusbaum C."/>
        </authorList>
    </citation>
    <scope>NUCLEOTIDE SEQUENCE [LARGE SCALE GENOMIC DNA]</scope>
</reference>
<reference key="9">
    <citation type="journal article" date="2004" name="Genome Res.">
        <title>The status, quality, and expansion of the NIH full-length cDNA project: the Mammalian Gene Collection (MGC).</title>
        <authorList>
            <consortium name="The MGC Project Team"/>
        </authorList>
    </citation>
    <scope>NUCLEOTIDE SEQUENCE [LARGE SCALE MRNA] (ISOFORM 1)</scope>
    <source>
        <tissue>Brain</tissue>
    </source>
</reference>
<reference key="10">
    <citation type="journal article" date="2000" name="Gene">
        <title>Cloning of three novel neuronal Cdk5 activator binding proteins.</title>
        <authorList>
            <person name="Ching Y.-P."/>
            <person name="Qi Z."/>
            <person name="Wang J.H."/>
        </authorList>
    </citation>
    <scope>TISSUE SPECIFICITY</scope>
</reference>
<reference key="11">
    <citation type="journal article" date="2005" name="J. Biol. Chem.">
        <title>Cdk5 activator-binding protein C53 regulates apoptosis induced by genotoxic stress via modulating the G2/M DNA damage checkpoint.</title>
        <authorList>
            <person name="Jiang H."/>
            <person name="Luo S."/>
            <person name="Li H."/>
        </authorList>
    </citation>
    <scope>FUNCTION</scope>
    <scope>SUBCELLULAR LOCATION</scope>
    <scope>INTERACTION WITH CCNB1</scope>
</reference>
<reference key="12">
    <citation type="journal article" date="2006" name="Biochem. J.">
        <title>A novel ARF-binding protein (LZAP) alters ARF regulation of HDM2.</title>
        <authorList>
            <person name="Wang J."/>
            <person name="He X."/>
            <person name="Luo Y."/>
            <person name="Yarbrough W.G."/>
        </authorList>
    </citation>
    <scope>FUNCTION</scope>
    <scope>INTERACTION WITH CDKN2A/ARF AND MDM2</scope>
    <scope>SUBCELLULAR LOCATION</scope>
</reference>
<reference key="13">
    <citation type="journal article" date="2007" name="Cancer Cell">
        <title>LZAP, a putative tumor suppressor, selectively inhibits NF-kappaB.</title>
        <authorList>
            <person name="Wang J."/>
            <person name="An H."/>
            <person name="Mayo M.W."/>
            <person name="Baldwin A.S."/>
            <person name="Yarbrough W.G."/>
        </authorList>
    </citation>
    <scope>FUNCTION</scope>
    <scope>INTERACTION WITH RELA</scope>
</reference>
<reference key="14">
    <citation type="journal article" date="2009" name="Cell Res.">
        <title>Tumor suppressor protein C53 antagonizes checkpoint kinases to promote cyclin-dependent kinase 1 activation.</title>
        <authorList>
            <person name="Jiang H."/>
            <person name="Wu J."/>
            <person name="He C."/>
            <person name="Yang W."/>
            <person name="Li H."/>
        </authorList>
    </citation>
    <scope>FUNCTION</scope>
    <scope>INTERACTION WITH CHEK1</scope>
    <scope>REGION</scope>
    <scope>SUBCELLULAR LOCATION</scope>
</reference>
<reference key="15">
    <citation type="journal article" date="2010" name="J. Biol. Chem.">
        <title>A novel LZAP-binding protein, NLBP, inhibits cell invasion.</title>
        <authorList>
            <person name="Kwon J."/>
            <person name="Cho H.J."/>
            <person name="Han S.H."/>
            <person name="No J.G."/>
            <person name="Kwon J.Y."/>
            <person name="Kim H."/>
        </authorList>
    </citation>
    <scope>INTERACTION WITH UFL1</scope>
</reference>
<reference key="16">
    <citation type="journal article" date="2010" name="J. Biol. Chem.">
        <title>A novel C53/LZAP-interacting protein regulates stability of C53/LZAP and DDRGK domain-containing Protein 1 (DDRGK1) and modulates NF-kappaB signaling.</title>
        <authorList>
            <person name="Wu J."/>
            <person name="Lei G."/>
            <person name="Mei M."/>
            <person name="Tang Y."/>
            <person name="Li H."/>
        </authorList>
    </citation>
    <scope>FUNCTION</scope>
    <scope>INTERACTION WITH DDRGK1 AND UFL1</scope>
    <scope>REGION</scope>
    <scope>UBIQUITINATION</scope>
</reference>
<reference key="17">
    <citation type="journal article" date="2011" name="BMC Syst. Biol.">
        <title>Initial characterization of the human central proteome.</title>
        <authorList>
            <person name="Burkard T.R."/>
            <person name="Planyavsky M."/>
            <person name="Kaupe I."/>
            <person name="Breitwieser F.P."/>
            <person name="Buerckstuemmer T."/>
            <person name="Bennett K.L."/>
            <person name="Superti-Furga G."/>
            <person name="Colinge J."/>
        </authorList>
    </citation>
    <scope>IDENTIFICATION BY MASS SPECTROMETRY [LARGE SCALE ANALYSIS]</scope>
</reference>
<reference key="18">
    <citation type="journal article" date="2011" name="PLoS ONE">
        <title>LZAP inhibits p38 MAPK (p38) phosphorylation and activity by facilitating p38 association with the wild-type p53 induced phosphatase 1 (WIP1).</title>
        <authorList>
            <person name="An H."/>
            <person name="Lu X."/>
            <person name="Liu D."/>
            <person name="Yarbrough W.G."/>
        </authorList>
    </citation>
    <scope>FUNCTION</scope>
    <scope>INTERACTION WITH MAPK14</scope>
</reference>
<reference key="19">
    <citation type="journal article" date="2012" name="J. Cell. Physiol.">
        <title>Nuclear gamma-tubulin associates with nucleoli and interacts with tumor suppressor protein C53.</title>
        <authorList>
            <person name="Horejsi B."/>
            <person name="Vinopal S."/>
            <person name="Sladkova V."/>
            <person name="Draberova E."/>
            <person name="Sulimenko V."/>
            <person name="Sulimenko T."/>
            <person name="Vosecka V."/>
            <person name="Philimonenko A."/>
            <person name="Hozak P."/>
            <person name="Katsetos C.D."/>
            <person name="Draber P."/>
        </authorList>
    </citation>
    <scope>INTERACTION WITH TUBG1</scope>
</reference>
<reference key="20">
    <citation type="journal article" date="2012" name="Oncol. Rep.">
        <title>Interaction of LHBs with C53 promotes hepatocyte mitotic entry: A novel mechanism for HBV-induced hepatocellular carcinoma.</title>
        <authorList>
            <person name="Lei Y."/>
            <person name="Liu H."/>
            <person name="Yang Y."/>
            <person name="Wang X."/>
            <person name="Ren N."/>
            <person name="Li B."/>
            <person name="Liu S."/>
            <person name="Cheng J."/>
            <person name="Fu X."/>
            <person name="Zhang J."/>
        </authorList>
    </citation>
    <scope>FUNCTION (MICROBIAL INFECTION)</scope>
    <scope>INTERACTION WITH HEPATITIS B VIRUS LARGE ENVELOPE PROTEIN</scope>
</reference>
<reference key="21">
    <citation type="journal article" date="2012" name="PLoS ONE">
        <title>Transcriptional regulation of the Ufm1 conjugation system in response to disturbance of the endoplasmic reticulum homeostasis and inhibition of vesicle trafficking.</title>
        <authorList>
            <person name="Zhang Y."/>
            <person name="Zhang M."/>
            <person name="Wu J."/>
            <person name="Lei G."/>
            <person name="Li H."/>
        </authorList>
    </citation>
    <scope>FUNCTION</scope>
</reference>
<reference key="22">
    <citation type="journal article" date="2013" name="Cell Res.">
        <title>Caspase-mediated cleavage of C53/LZAP protein causes abnormal microtubule bundling and rupture of the nuclear envelope.</title>
        <authorList>
            <person name="Wu J."/>
            <person name="Jiang H."/>
            <person name="Luo S."/>
            <person name="Zhang M."/>
            <person name="Zhang Y."/>
            <person name="Sun F."/>
            <person name="Huang S."/>
            <person name="Li H."/>
        </authorList>
    </citation>
    <scope>FUNCTION</scope>
    <scope>CLEAVAGE BY CASPASES</scope>
    <scope>MUTAGENESIS OF ASP-268; ASP-282 AND ASP-311</scope>
    <scope>SUBCELLULAR LOCATION</scope>
</reference>
<reference key="23">
    <citation type="journal article" date="2014" name="J. Proteomics">
        <title>An enzyme assisted RP-RPLC approach for in-depth analysis of human liver phosphoproteome.</title>
        <authorList>
            <person name="Bian Y."/>
            <person name="Song C."/>
            <person name="Cheng K."/>
            <person name="Dong M."/>
            <person name="Wang F."/>
            <person name="Huang J."/>
            <person name="Sun D."/>
            <person name="Wang L."/>
            <person name="Ye M."/>
            <person name="Zou H."/>
        </authorList>
    </citation>
    <scope>IDENTIFICATION BY MASS SPECTROMETRY [LARGE SCALE ANALYSIS]</scope>
    <source>
        <tissue>Liver</tissue>
    </source>
</reference>
<reference key="24">
    <citation type="journal article" date="2015" name="Cell Rep.">
        <title>SUMO-2 orchestrates chromatin modifiers in response to DNA damage.</title>
        <authorList>
            <person name="Hendriks I.A."/>
            <person name="Treffers L.W."/>
            <person name="Verlaan-de Vries M."/>
            <person name="Olsen J.V."/>
            <person name="Vertegaal A.C."/>
        </authorList>
    </citation>
    <scope>SUMOYLATION [LARGE SCALE ANALYSIS] AT LYS-450</scope>
    <scope>IDENTIFICATION BY MASS SPECTROMETRY [LARGE SCALE ANALYSIS]</scope>
</reference>
<reference key="25">
    <citation type="journal article" date="2015" name="Proteomics">
        <title>N-terminome analysis of the human mitochondrial proteome.</title>
        <authorList>
            <person name="Vaca Jacome A.S."/>
            <person name="Rabilloud T."/>
            <person name="Schaeffer-Reiss C."/>
            <person name="Rompais M."/>
            <person name="Ayoub D."/>
            <person name="Lane L."/>
            <person name="Bairoch A."/>
            <person name="Van Dorsselaer A."/>
            <person name="Carapito C."/>
        </authorList>
    </citation>
    <scope>IDENTIFICATION BY MASS SPECTROMETRY [LARGE SCALE ANALYSIS]</scope>
</reference>
<reference key="26">
    <citation type="journal article" date="2019" name="Development">
        <title>CDK5RAP3, a UFL1 substrate adaptor, is crucial for liver development.</title>
        <authorList>
            <person name="Yang R."/>
            <person name="Wang H."/>
            <person name="Kang B."/>
            <person name="Chen B."/>
            <person name="Shi Y."/>
            <person name="Yang S."/>
            <person name="Sun L."/>
            <person name="Liu Y."/>
            <person name="Xiao W."/>
            <person name="Zhang T."/>
            <person name="Yang J."/>
            <person name="Zhang Y."/>
            <person name="Zhu M."/>
            <person name="Xu P."/>
            <person name="Chang Y."/>
            <person name="Jia Y."/>
            <person name="Huang Y."/>
        </authorList>
    </citation>
    <scope>FUNCTION</scope>
</reference>
<reference key="27">
    <citation type="journal article" date="2020" name="Elife">
        <title>A cross-kingdom conserved ER-phagy receptor maintains endoplasmic reticulum homeostasis during stress.</title>
        <authorList>
            <person name="Stephani M."/>
            <person name="Picchianti L."/>
            <person name="Gajic A."/>
            <person name="Beveridge R."/>
            <person name="Skarwan E."/>
            <person name="Sanchez de Medina Hernandez V."/>
            <person name="Mohseni A."/>
            <person name="Clavel M."/>
            <person name="Zeng Y."/>
            <person name="Naumann C."/>
            <person name="Matuszkiewicz M."/>
            <person name="Turco E."/>
            <person name="Loefke C."/>
            <person name="Li B."/>
            <person name="Duernberger G."/>
            <person name="Schutzbier M."/>
            <person name="Chen H.T."/>
            <person name="Abdrakhmanov A."/>
            <person name="Savova A."/>
            <person name="Chia K.S."/>
            <person name="Djamei A."/>
            <person name="Schaffner I."/>
            <person name="Abel S."/>
            <person name="Jiang L."/>
            <person name="Mechtler K."/>
            <person name="Ikeda F."/>
            <person name="Martens S."/>
            <person name="Clausen T."/>
            <person name="Dagdas Y."/>
        </authorList>
    </citation>
    <scope>FUNCTION</scope>
    <scope>IDENTIFICATION IN THE UREL COMPLEX</scope>
    <scope>INTERACTION WITH GABARAP AND GABARAPL1</scope>
    <scope>DOMAIN</scope>
</reference>
<reference key="28">
    <citation type="journal article" date="2022" name="EMBO J.">
        <title>A non-canonical scaffold-type E3 ligase complex mediates protein UFMylation.</title>
        <authorList>
            <person name="Peter J.J."/>
            <person name="Magnussen H.M."/>
            <person name="DaRosa P.A."/>
            <person name="Millrine D."/>
            <person name="Matthews S.P."/>
            <person name="Lamoliatte F."/>
            <person name="Sundaramoorthy R."/>
            <person name="Kopito R.R."/>
            <person name="Kulathu Y."/>
        </authorList>
    </citation>
    <scope>FUNCTION</scope>
    <scope>IDENTIFICATION IN THE UREL COMPLEX</scope>
</reference>
<reference key="29">
    <citation type="journal article" date="2022" name="Nat. Commun.">
        <title>The UFM1 system regulates ER-phagy through the ufmylation of CYB5R3.</title>
        <authorList>
            <person name="Ishimura R."/>
            <person name="El-Gowily A.H."/>
            <person name="Noshiro D."/>
            <person name="Komatsu-Hirota S."/>
            <person name="Ono Y."/>
            <person name="Shindo M."/>
            <person name="Hatta T."/>
            <person name="Abe M."/>
            <person name="Uemura T."/>
            <person name="Lee-Okada H.C."/>
            <person name="Mohamed T.M."/>
            <person name="Yokomizo T."/>
            <person name="Ueno T."/>
            <person name="Sakimura K."/>
            <person name="Natsume T."/>
            <person name="Sorimachi H."/>
            <person name="Inada T."/>
            <person name="Waguri S."/>
            <person name="Noda N.N."/>
            <person name="Komatsu M."/>
        </authorList>
    </citation>
    <scope>FUNCTION</scope>
    <scope>SUBCELLULAR LOCATION</scope>
    <scope>IDENTIFICATION IN THE UREL COMPLEX</scope>
    <scope>INTERACTION WITH MAP1LC3A; MAP1LC3B; GABARAP; GABARAPL1 AND GABARAPL2</scope>
    <scope>MUTAGENESIS OF TRP-269; TRP-294 AND TRP-312</scope>
</reference>
<reference key="30">
    <citation type="journal article" date="2023" name="EMBO J.">
        <title>Shuffled ATG8 interacting motifs form an ancestral bridge between UFMylation and autophagy.</title>
        <authorList>
            <person name="Picchianti L."/>
            <person name="Sanchez de Medina Hernandez V."/>
            <person name="Zhan N."/>
            <person name="Irwin N.A."/>
            <person name="Groh R."/>
            <person name="Stephani M."/>
            <person name="Hornegger H."/>
            <person name="Beveridge R."/>
            <person name="Sawa-Makarska J."/>
            <person name="Lendl T."/>
            <person name="Grujic N."/>
            <person name="Naumann C."/>
            <person name="Martens S."/>
            <person name="Richards T.A."/>
            <person name="Clausen T."/>
            <person name="Ramundo S."/>
            <person name="Karagoez G.E."/>
            <person name="Dagdas Y."/>
        </authorList>
    </citation>
    <scope>INTERACTION WITH GABARAP</scope>
    <scope>DOMAIN</scope>
    <scope>MUTAGENESIS OF TRP-269; TRP-294 AND TRP-312</scope>
</reference>
<reference key="31">
    <citation type="journal article" date="2023" name="Sci. Adv.">
        <title>Mechanistic insights into the roles of the UFM1 E3 ligase complex in ufmylation and ribosome-associated protein quality control.</title>
        <authorList>
            <person name="Ishimura R."/>
            <person name="Ito S."/>
            <person name="Mao G."/>
            <person name="Komatsu-Hirota S."/>
            <person name="Inada T."/>
            <person name="Noda N.N."/>
            <person name="Komatsu M."/>
        </authorList>
    </citation>
    <scope>FUNCTION</scope>
    <scope>IDENTIFICATION IN THE UREL COMPLEX</scope>
    <scope>MUTAGENESIS OF GLU-217; ASP-355; GLU-359; GLU-373 AND ARG-432</scope>
</reference>
<reference evidence="37" key="32">
    <citation type="journal article" date="2024" name="Nature">
        <title>The UFM1 E3 ligase recognizes and releases 60S ribosomes from ER translocons.</title>
        <authorList>
            <person name="Makhlouf L."/>
            <person name="Peter J.J."/>
            <person name="Magnussen H.M."/>
            <person name="Thakur R."/>
            <person name="Millrine D."/>
            <person name="Minshull T.C."/>
            <person name="Harrison G."/>
            <person name="Varghese J."/>
            <person name="Lamoliatte F."/>
            <person name="Foglizzo M."/>
            <person name="Macartney T."/>
            <person name="Calabrese A.N."/>
            <person name="Zeqiraj E."/>
            <person name="Kulathu Y."/>
        </authorList>
    </citation>
    <scope>STRUCTURE BY ELECTRON MICROSCOPY (3.2 ANGSTROMS) IN COMPLEX WITH UFL1 AND RPL10A</scope>
    <scope>FUNCTION</scope>
    <scope>SUBCELLULAR LOCATION</scope>
    <scope>IDENTIFICATION IN THE UREL COMPLEX</scope>
    <scope>DOMAIN</scope>
</reference>
<reference evidence="34 35 36" key="33">
    <citation type="journal article" date="2024" name="Nature">
        <title>UFM1 E3 ligase promotes recycling of 60S ribosomal subunits from the ER.</title>
        <authorList>
            <person name="DaRosa P.A."/>
            <person name="Penchev I."/>
            <person name="Gumbin S.C."/>
            <person name="Scavone F."/>
            <person name="Wachalska M."/>
            <person name="Paulo J.A."/>
            <person name="Ordureau A."/>
            <person name="Peter J.J."/>
            <person name="Kulathu Y."/>
            <person name="Harper J.W."/>
            <person name="Becker T."/>
            <person name="Beckmann R."/>
            <person name="Kopito R.R."/>
        </authorList>
    </citation>
    <scope>STRUCTURE BY ELECTRON MICROSCOPY (2.9 ANGSTROMS) OF THE UREL COMPLEX IN COMPLEX WITH THE 60S RIBOSOME</scope>
    <scope>FUNCTION</scope>
    <scope>SUBCELLULAR LOCATION</scope>
    <scope>IDENTIFICATION IN THE UREL COMPLEX</scope>
</reference>
<comment type="function">
    <text evidence="1 6 7 8 9 11 12 15 16 17 18 19 20 22 23 24">Substrate adapter of E3 ligase complexes mediating ufmylation, the covalent attachment of the ubiquitin-like modifier UFM1 to substrate proteins, and which is involved in various processes, such as ribosome recycling and reticulophagy (also called ER-phagy) (PubMed:23152784, PubMed:30635284, PubMed:32851973, PubMed:36121123, PubMed:36543799, PubMed:37595036, PubMed:38383785, PubMed:38383789). As part of the UREL complex, plays a key role in ribosome recycling by promoting mono-ufmylation of RPL26/uL24 subunit of the 60S ribosome (PubMed:38383785, PubMed:38383789). Ufmylation of RPL26/uL24 occurs on free 60S ribosomes following ribosome dissociation: it weakens the junction between post-termination 60S subunits and SEC61 translocons, promoting release and recycling of the large ribosomal subunit from the endoplasmic reticulum membrane (PubMed:38383785, PubMed:38383789). Ufmylation of RPL26/uL24 and subsequent 60S ribosome recycling either take place after normal termination of translation or after ribosome stalling during cotranslational translocation at the endoplasmic reticulum (PubMed:32851973, PubMed:37595036, PubMed:38383785, PubMed:38383789). Within the UREL complex, CDK5RAP3 acts as a substrate adapter that constrains UFL1 ligase activity to mono-ufmylate RPL26/uL24 at 'Lys-134' (PubMed:36121123, PubMed:38383785, PubMed:38383789). The UREL complex is also involved in reticulophagy in response to endoplasmic reticulum stress by promoting ufmylation of proteins such as CYB5R3, thereby promoting lysosomal degradation of ufmylated proteins (PubMed:36543799). Also acts as a regulator of transcription: negatively regulates NF-kappa-B-mediated gene transcription through the control of RELA phosphorylation (PubMed:17785205, PubMed:20228063). Also regulates mitotic G2/M transition checkpoint and mitotic G2 DNA damage checkpoint (PubMed:15790566, PubMed:19223857). Through its interaction with CDKN2A/ARF and MDM2 may induce MDM2-dependent p53/TP53 ubiquitination, stabilization and activation in the nucleus, thereby promoting G1 cell cycle arrest and inhibition of cell proliferation (PubMed:16173922). May also play a role in the rupture of the nuclear envelope during apoptosis (PubMed:23478299). May regulate MAPK14 activity by regulating its dephosphorylation by PPM1D/WIP1 (PubMed:21283629). Required for liver development (By similarity).</text>
</comment>
<comment type="function">
    <text evidence="14">(Microbial infection) May be negatively regulated by hepatitis B virus large envelope protein mutant pre-s2 to promote mitotic entry.</text>
</comment>
<comment type="subunit">
    <text evidence="2 5 6 7 8 9 10 11 12 13 18 19 20 21 22 23 24">Substrate adapter component of the UFM1 ribosome E3 ligase (UREL) complex, composed of UFL1, DDRGK1 and CDK5RAP3 (PubMed:20164180, PubMed:20228063, PubMed:32851973, PubMed:36121123, PubMed:36543799, PubMed:37595036, PubMed:38383785, PubMed:38383789). Interaction with UFL1 anchors CDK5RAP3 in the cytoplasm, preventing its translocation to the nucleus which allows expression of the CCND1 cyclin and progression of cells through the G1/S transition (By similarity). Interacts with ATG8 family proteins MAP1LC3A, MAP1LC3B, GABARAP, GABARAPL1 and GABARAPL2 (PubMed:32851973, PubMed:36543799, PubMed:36762703). Interacts with CDK5R1; competes with CDK5RAP1 and CDK5RAP2 (PubMed:12737517). Interacts with RELA (PubMed:17785205). Interacts with CHEK1; may negatively regulate CHEK1 and thereby stimulate entry into mitosis (PubMed:19223857). Interacts with CDKN2A/ARF and MDM2; forms a ternary complex involved in regulation of p53/TP53 (PubMed:16173922). Interacts with MAPK14 (PubMed:21283629). Interacts with CCNB1 (PubMed:15790566). Interacts with TUBG1; may regulate CDK5RAP3 in mitotic G2/M transition checkpoint (PubMed:21465471).</text>
</comment>
<comment type="subunit">
    <text evidence="14">(Microbial infection) Interacts with hepatitis B virus large envelope protein mutant pre-s2; promotes mitotic entry.</text>
</comment>
<comment type="interaction">
    <interactant intactId="EBI-718818">
        <id>Q96JB5</id>
    </interactant>
    <interactant intactId="EBI-744771">
        <id>O75344</id>
        <label>FKBP6</label>
    </interactant>
    <organismsDiffer>false</organismsDiffer>
    <experiments>12</experiments>
</comment>
<comment type="interaction">
    <interactant intactId="EBI-718818">
        <id>Q96JB5</id>
    </interactant>
    <interactant intactId="EBI-73886">
        <id>Q04206</id>
        <label>RELA</label>
    </interactant>
    <organismsDiffer>false</organismsDiffer>
    <experiments>4</experiments>
</comment>
<comment type="interaction">
    <interactant intactId="EBI-718818">
        <id>Q96JB5</id>
    </interactant>
    <interactant intactId="EBI-308511">
        <id>Q9UJ04</id>
        <label>TSPYL4</label>
    </interactant>
    <organismsDiffer>false</organismsDiffer>
    <experiments>6</experiments>
</comment>
<comment type="interaction">
    <interactant intactId="EBI-718818">
        <id>Q96JB5</id>
    </interactant>
    <interactant intactId="EBI-1045733">
        <id>Q9Y3C8</id>
        <label>UFC1</label>
    </interactant>
    <organismsDiffer>false</organismsDiffer>
    <experiments>6</experiments>
</comment>
<comment type="interaction">
    <interactant intactId="EBI-718818">
        <id>Q96JB5</id>
    </interactant>
    <interactant intactId="EBI-1048088">
        <id>O94874</id>
        <label>UFL1</label>
    </interactant>
    <organismsDiffer>false</organismsDiffer>
    <experiments>11</experiments>
</comment>
<comment type="subcellular location">
    <subcellularLocation>
        <location evidence="20 23 24">Endoplasmic reticulum membrane</location>
    </subcellularLocation>
    <subcellularLocation>
        <location evidence="6 7 9">Cytoplasm</location>
    </subcellularLocation>
    <subcellularLocation>
        <location evidence="7">Nucleus</location>
    </subcellularLocation>
    <subcellularLocation>
        <location evidence="9">Cytoplasm</location>
        <location evidence="9">Cytoskeleton</location>
        <location evidence="9">Microtubule organizing center</location>
        <location evidence="9">Centrosome</location>
    </subcellularLocation>
    <subcellularLocation>
        <location evidence="16">Cytoplasm</location>
        <location evidence="16">Cytoskeleton</location>
    </subcellularLocation>
    <text evidence="16 23 24">Tethered to the endoplasmic reticulum membrane as part of the UFM1 ribosome E3 ligase (UREL) complex (PubMed:38383785, PubMed:38383789). Colocalizes and associates with microtubules (PubMed:23478299).</text>
</comment>
<comment type="alternative products">
    <event type="alternative splicing"/>
    <isoform>
        <id>Q96JB5-1</id>
        <name>1</name>
        <sequence type="displayed"/>
    </isoform>
    <isoform>
        <id>Q96JB5-2</id>
        <name>2</name>
        <name>IC53</name>
        <sequence type="described" ref="VSP_007566 VSP_007567"/>
    </isoform>
    <isoform>
        <id>Q96JB5-3</id>
        <name>3</name>
        <name>IC53-2</name>
        <sequence type="described" ref="VSP_007568"/>
    </isoform>
    <isoform>
        <id>Q96JB5-4</id>
        <name>4</name>
        <sequence type="described" ref="VSP_055646"/>
    </isoform>
</comment>
<comment type="tissue specificity">
    <text evidence="3 4 5">Ubiquitously expressed (PubMed:10721722, PubMed:12054757). Expressed in heart, brain, placenta, lung, liver, skeletal muscle, kidney and pancreas. Isoform 3 is expressed in kidney, liver, skeletal muscle and placenta (PubMed:12737517).</text>
</comment>
<comment type="domain">
    <text evidence="18 21">The shuffled ATG8-binding motifs mediate interaction with both ATG8 family protein and UFM1.</text>
</comment>
<comment type="domain">
    <text evidence="24">The RPL10a-binding domain (RBD) anchors the UREL complex onto the ribosome via association with RPL10a/ul1.</text>
</comment>
<comment type="PTM">
    <text evidence="2">May be phosphorylated by CDK5.</text>
</comment>
<comment type="PTM">
    <text evidence="11">Ubiquitinated. Probably triggers proteasomal degradation and is negatively regulated by UFL1.</text>
</comment>
<comment type="PTM">
    <text evidence="1">May be ufmylated.</text>
</comment>
<comment type="PTM">
    <text evidence="16">Cleaved by caspases early during apoptosis, the resulting peptides may play a role in rupture of the nuclear envelope.</text>
</comment>
<comment type="miscellaneous">
    <molecule>Isoform 2</molecule>
    <text evidence="30">Due to an intron retention.</text>
</comment>
<comment type="miscellaneous">
    <molecule>Isoform 3</molecule>
    <text evidence="30">Due to intron retention.</text>
</comment>
<comment type="similarity">
    <text evidence="30">Belongs to the CDK5RAP3 family.</text>
</comment>
<comment type="sequence caution" evidence="30">
    <conflict type="frameshift">
        <sequence resource="EMBL-CDS" id="AAK69655"/>
    </conflict>
</comment>
<evidence type="ECO:0000250" key="1">
    <source>
        <dbReference type="UniProtKB" id="Q99LM2"/>
    </source>
</evidence>
<evidence type="ECO:0000250" key="2">
    <source>
        <dbReference type="UniProtKB" id="Q9JLH7"/>
    </source>
</evidence>
<evidence type="ECO:0000269" key="3">
    <source>
    </source>
</evidence>
<evidence type="ECO:0000269" key="4">
    <source>
    </source>
</evidence>
<evidence type="ECO:0000269" key="5">
    <source>
    </source>
</evidence>
<evidence type="ECO:0000269" key="6">
    <source>
    </source>
</evidence>
<evidence type="ECO:0000269" key="7">
    <source>
    </source>
</evidence>
<evidence type="ECO:0000269" key="8">
    <source>
    </source>
</evidence>
<evidence type="ECO:0000269" key="9">
    <source>
    </source>
</evidence>
<evidence type="ECO:0000269" key="10">
    <source>
    </source>
</evidence>
<evidence type="ECO:0000269" key="11">
    <source>
    </source>
</evidence>
<evidence type="ECO:0000269" key="12">
    <source>
    </source>
</evidence>
<evidence type="ECO:0000269" key="13">
    <source>
    </source>
</evidence>
<evidence type="ECO:0000269" key="14">
    <source>
    </source>
</evidence>
<evidence type="ECO:0000269" key="15">
    <source>
    </source>
</evidence>
<evidence type="ECO:0000269" key="16">
    <source>
    </source>
</evidence>
<evidence type="ECO:0000269" key="17">
    <source>
    </source>
</evidence>
<evidence type="ECO:0000269" key="18">
    <source>
    </source>
</evidence>
<evidence type="ECO:0000269" key="19">
    <source>
    </source>
</evidence>
<evidence type="ECO:0000269" key="20">
    <source>
    </source>
</evidence>
<evidence type="ECO:0000269" key="21">
    <source>
    </source>
</evidence>
<evidence type="ECO:0000269" key="22">
    <source>
    </source>
</evidence>
<evidence type="ECO:0000269" key="23">
    <source>
    </source>
</evidence>
<evidence type="ECO:0000269" key="24">
    <source>
    </source>
</evidence>
<evidence type="ECO:0000303" key="25">
    <source>
    </source>
</evidence>
<evidence type="ECO:0000303" key="26">
    <source>
    </source>
</evidence>
<evidence type="ECO:0000303" key="27">
    <source>
    </source>
</evidence>
<evidence type="ECO:0000303" key="28">
    <source>
    </source>
</evidence>
<evidence type="ECO:0000303" key="29">
    <source>
    </source>
</evidence>
<evidence type="ECO:0000305" key="30"/>
<evidence type="ECO:0000305" key="31">
    <source>
    </source>
</evidence>
<evidence type="ECO:0000312" key="32">
    <source>
        <dbReference type="EMBL" id="AAK69655.1"/>
    </source>
</evidence>
<evidence type="ECO:0000312" key="33">
    <source>
        <dbReference type="HGNC" id="HGNC:18673"/>
    </source>
</evidence>
<evidence type="ECO:0007744" key="34">
    <source>
        <dbReference type="PDB" id="8OHD"/>
    </source>
</evidence>
<evidence type="ECO:0007744" key="35">
    <source>
        <dbReference type="PDB" id="8OJ0"/>
    </source>
</evidence>
<evidence type="ECO:0007744" key="36">
    <source>
        <dbReference type="PDB" id="8OJ5"/>
    </source>
</evidence>
<evidence type="ECO:0007744" key="37">
    <source>
        <dbReference type="PDB" id="8QFC"/>
    </source>
</evidence>
<evidence type="ECO:0007744" key="38">
    <source>
    </source>
</evidence>
<evidence type="ECO:0007829" key="39">
    <source>
        <dbReference type="PDB" id="8QFC"/>
    </source>
</evidence>
<organism>
    <name type="scientific">Homo sapiens</name>
    <name type="common">Human</name>
    <dbReference type="NCBI Taxonomy" id="9606"/>
    <lineage>
        <taxon>Eukaryota</taxon>
        <taxon>Metazoa</taxon>
        <taxon>Chordata</taxon>
        <taxon>Craniata</taxon>
        <taxon>Vertebrata</taxon>
        <taxon>Euteleostomi</taxon>
        <taxon>Mammalia</taxon>
        <taxon>Eutheria</taxon>
        <taxon>Euarchontoglires</taxon>
        <taxon>Primates</taxon>
        <taxon>Haplorrhini</taxon>
        <taxon>Catarrhini</taxon>
        <taxon>Hominidae</taxon>
        <taxon>Homo</taxon>
    </lineage>
</organism>
<proteinExistence type="evidence at protein level"/>
<accession>Q96JB5</accession>
<accession>B7Z6N4</accession>
<accession>D3DTU1</accession>
<accession>D3DTU2</accession>
<accession>F5H3I5</accession>
<accession>Q53FA2</accession>
<accession>Q9H3F8</accession>
<accession>Q9H8G0</accession>
<accession>Q9HBR9</accession>
<protein>
    <recommendedName>
        <fullName evidence="30">CDK5 regulatory subunit-associated protein 3</fullName>
    </recommendedName>
    <alternativeName>
        <fullName evidence="31">CDK5 activator-binding protein C53</fullName>
    </alternativeName>
    <alternativeName>
        <fullName evidence="28">LXXLL/leucine-zipper-containing ARF-binding protein</fullName>
    </alternativeName>
    <alternativeName>
        <fullName evidence="32">Protein HSF-27</fullName>
    </alternativeName>
</protein>
<dbReference type="EMBL" id="AF110322">
    <property type="protein sequence ID" value="AAG39277.1"/>
    <property type="molecule type" value="mRNA"/>
</dbReference>
<dbReference type="EMBL" id="AF217982">
    <property type="protein sequence ID" value="AAG17225.1"/>
    <property type="molecule type" value="mRNA"/>
</dbReference>
<dbReference type="EMBL" id="AF343090">
    <property type="protein sequence ID" value="AAK69655.1"/>
    <property type="status" value="ALT_FRAME"/>
    <property type="molecule type" value="mRNA"/>
</dbReference>
<dbReference type="EMBL" id="AB062433">
    <property type="protein sequence ID" value="BAB93496.1"/>
    <property type="molecule type" value="mRNA"/>
</dbReference>
<dbReference type="EMBL" id="AK023722">
    <property type="protein sequence ID" value="BAB14657.1"/>
    <property type="molecule type" value="mRNA"/>
</dbReference>
<dbReference type="EMBL" id="AK300643">
    <property type="protein sequence ID" value="BAH13320.1"/>
    <property type="molecule type" value="mRNA"/>
</dbReference>
<dbReference type="EMBL" id="AK223387">
    <property type="protein sequence ID" value="BAD97107.1"/>
    <property type="molecule type" value="mRNA"/>
</dbReference>
<dbReference type="EMBL" id="AC018521">
    <property type="status" value="NOT_ANNOTATED_CDS"/>
    <property type="molecule type" value="Genomic_DNA"/>
</dbReference>
<dbReference type="EMBL" id="CH471109">
    <property type="protein sequence ID" value="EAW94772.1"/>
    <property type="molecule type" value="Genomic_DNA"/>
</dbReference>
<dbReference type="EMBL" id="CH471109">
    <property type="protein sequence ID" value="EAW94774.1"/>
    <property type="molecule type" value="Genomic_DNA"/>
</dbReference>
<dbReference type="EMBL" id="CH471109">
    <property type="protein sequence ID" value="EAW94775.1"/>
    <property type="molecule type" value="Genomic_DNA"/>
</dbReference>
<dbReference type="EMBL" id="CH471109">
    <property type="protein sequence ID" value="EAW94778.1"/>
    <property type="molecule type" value="Genomic_DNA"/>
</dbReference>
<dbReference type="EMBL" id="BC009957">
    <property type="protein sequence ID" value="AAH09957.1"/>
    <property type="molecule type" value="mRNA"/>
</dbReference>
<dbReference type="EMBL" id="BC072435">
    <property type="protein sequence ID" value="AAH72435.1"/>
    <property type="molecule type" value="mRNA"/>
</dbReference>
<dbReference type="CCDS" id="CCDS42356.1">
    <molecule id="Q96JB5-1"/>
</dbReference>
<dbReference type="CCDS" id="CCDS62232.1">
    <molecule id="Q96JB5-4"/>
</dbReference>
<dbReference type="PIR" id="JC7863">
    <property type="entry name" value="JC7863"/>
</dbReference>
<dbReference type="RefSeq" id="NP_001265126.1">
    <molecule id="Q96JB5-4"/>
    <property type="nucleotide sequence ID" value="NM_001278197.2"/>
</dbReference>
<dbReference type="RefSeq" id="NP_001265127.1">
    <property type="nucleotide sequence ID" value="NM_001278198.1"/>
</dbReference>
<dbReference type="RefSeq" id="NP_001265145.1">
    <molecule id="Q96JB5-3"/>
    <property type="nucleotide sequence ID" value="NM_001278216.2"/>
</dbReference>
<dbReference type="RefSeq" id="NP_001265146.1">
    <molecule id="Q96JB5-2"/>
    <property type="nucleotide sequence ID" value="NM_001278217.2"/>
</dbReference>
<dbReference type="RefSeq" id="NP_788276.1">
    <molecule id="Q96JB5-1"/>
    <property type="nucleotide sequence ID" value="NM_176096.3"/>
</dbReference>
<dbReference type="RefSeq" id="XP_011523599.1">
    <molecule id="Q96JB5-4"/>
    <property type="nucleotide sequence ID" value="XM_011525297.1"/>
</dbReference>
<dbReference type="RefSeq" id="XP_016880653.1">
    <property type="nucleotide sequence ID" value="XM_017025164.1"/>
</dbReference>
<dbReference type="RefSeq" id="XP_016880654.1">
    <property type="nucleotide sequence ID" value="XM_017025165.1"/>
</dbReference>
<dbReference type="RefSeq" id="XP_054173383.1">
    <molecule id="Q96JB5-4"/>
    <property type="nucleotide sequence ID" value="XM_054317408.1"/>
</dbReference>
<dbReference type="PDB" id="8OHD">
    <property type="method" value="EM"/>
    <property type="resolution" value="3.10 A"/>
    <property type="chains" value="B=1-506"/>
</dbReference>
<dbReference type="PDB" id="8OJ0">
    <property type="method" value="EM"/>
    <property type="resolution" value="3.30 A"/>
    <property type="chains" value="B=1-506"/>
</dbReference>
<dbReference type="PDB" id="8OJ5">
    <property type="method" value="EM"/>
    <property type="resolution" value="2.90 A"/>
    <property type="chains" value="B=1-506"/>
</dbReference>
<dbReference type="PDB" id="8QFC">
    <property type="method" value="EM"/>
    <property type="resolution" value="3.20 A"/>
    <property type="chains" value="C=1-506"/>
</dbReference>
<dbReference type="PDBsum" id="8OHD"/>
<dbReference type="PDBsum" id="8OJ0"/>
<dbReference type="PDBsum" id="8OJ5"/>
<dbReference type="PDBsum" id="8QFC"/>
<dbReference type="EMDB" id="EMD-16880"/>
<dbReference type="EMDB" id="EMD-16902"/>
<dbReference type="EMDB" id="EMD-16905"/>
<dbReference type="EMDB" id="EMD-18381"/>
<dbReference type="SMR" id="Q96JB5"/>
<dbReference type="BioGRID" id="123213">
    <property type="interactions" value="191"/>
</dbReference>
<dbReference type="ComplexPortal" id="CPX-8304">
    <property type="entry name" value="UFM1 ribosome E3 ligase complex"/>
</dbReference>
<dbReference type="FunCoup" id="Q96JB5">
    <property type="interactions" value="2347"/>
</dbReference>
<dbReference type="IntAct" id="Q96JB5">
    <property type="interactions" value="85"/>
</dbReference>
<dbReference type="MINT" id="Q96JB5"/>
<dbReference type="STRING" id="9606.ENSP00000438886"/>
<dbReference type="iPTMnet" id="Q96JB5"/>
<dbReference type="PhosphoSitePlus" id="Q96JB5"/>
<dbReference type="SwissPalm" id="Q96JB5"/>
<dbReference type="BioMuta" id="CDK5RAP3"/>
<dbReference type="DMDM" id="32129444"/>
<dbReference type="jPOST" id="Q96JB5"/>
<dbReference type="MassIVE" id="Q96JB5"/>
<dbReference type="PaxDb" id="9606-ENSP00000438886"/>
<dbReference type="PeptideAtlas" id="Q96JB5"/>
<dbReference type="ProteomicsDB" id="26284"/>
<dbReference type="ProteomicsDB" id="76930">
    <molecule id="Q96JB5-1"/>
</dbReference>
<dbReference type="ProteomicsDB" id="76931">
    <molecule id="Q96JB5-2"/>
</dbReference>
<dbReference type="ProteomicsDB" id="76932">
    <molecule id="Q96JB5-3"/>
</dbReference>
<dbReference type="Pumba" id="Q96JB5"/>
<dbReference type="Antibodypedia" id="8591">
    <property type="antibodies" value="234 antibodies from 31 providers"/>
</dbReference>
<dbReference type="DNASU" id="80279"/>
<dbReference type="Ensembl" id="ENST00000338399.9">
    <molecule id="Q96JB5-1"/>
    <property type="protein sequence ID" value="ENSP00000344683.4"/>
    <property type="gene ID" value="ENSG00000108465.15"/>
</dbReference>
<dbReference type="Ensembl" id="ENST00000536708.6">
    <molecule id="Q96JB5-4"/>
    <property type="protein sequence ID" value="ENSP00000438886.2"/>
    <property type="gene ID" value="ENSG00000108465.15"/>
</dbReference>
<dbReference type="GeneID" id="80279"/>
<dbReference type="KEGG" id="hsa:80279"/>
<dbReference type="MANE-Select" id="ENST00000338399.9">
    <property type="protein sequence ID" value="ENSP00000344683.4"/>
    <property type="RefSeq nucleotide sequence ID" value="NM_176096.3"/>
    <property type="RefSeq protein sequence ID" value="NP_788276.1"/>
</dbReference>
<dbReference type="UCSC" id="uc002imr.5">
    <molecule id="Q96JB5-1"/>
    <property type="organism name" value="human"/>
</dbReference>
<dbReference type="AGR" id="HGNC:18673"/>
<dbReference type="CTD" id="80279"/>
<dbReference type="DisGeNET" id="80279"/>
<dbReference type="GeneCards" id="CDK5RAP3"/>
<dbReference type="HGNC" id="HGNC:18673">
    <property type="gene designation" value="CDK5RAP3"/>
</dbReference>
<dbReference type="HPA" id="ENSG00000108465">
    <property type="expression patterns" value="Low tissue specificity"/>
</dbReference>
<dbReference type="MIM" id="608202">
    <property type="type" value="gene"/>
</dbReference>
<dbReference type="neXtProt" id="NX_Q96JB5"/>
<dbReference type="OpenTargets" id="ENSG00000108465"/>
<dbReference type="PharmGKB" id="PA38633"/>
<dbReference type="VEuPathDB" id="HostDB:ENSG00000108465"/>
<dbReference type="eggNOG" id="KOG2607">
    <property type="taxonomic scope" value="Eukaryota"/>
</dbReference>
<dbReference type="GeneTree" id="ENSGT00390000000713"/>
<dbReference type="HOGENOM" id="CLU_025645_1_0_1"/>
<dbReference type="InParanoid" id="Q96JB5"/>
<dbReference type="OMA" id="CRLYEKN"/>
<dbReference type="OrthoDB" id="340432at2759"/>
<dbReference type="PAN-GO" id="Q96JB5">
    <property type="GO annotations" value="2 GO annotations based on evolutionary models"/>
</dbReference>
<dbReference type="PhylomeDB" id="Q96JB5"/>
<dbReference type="PathwayCommons" id="Q96JB5"/>
<dbReference type="SignaLink" id="Q96JB5"/>
<dbReference type="BioGRID-ORCS" id="80279">
    <property type="hits" value="61 hits in 1170 CRISPR screens"/>
</dbReference>
<dbReference type="CD-CODE" id="8C2F96ED">
    <property type="entry name" value="Centrosome"/>
</dbReference>
<dbReference type="CD-CODE" id="FB4E32DD">
    <property type="entry name" value="Presynaptic clusters and postsynaptic densities"/>
</dbReference>
<dbReference type="ChiTaRS" id="CDK5RAP3">
    <property type="organism name" value="human"/>
</dbReference>
<dbReference type="GeneWiki" id="CDK5RAP3"/>
<dbReference type="GenomeRNAi" id="80279"/>
<dbReference type="Pharos" id="Q96JB5">
    <property type="development level" value="Tbio"/>
</dbReference>
<dbReference type="PRO" id="PR:Q96JB5"/>
<dbReference type="Proteomes" id="UP000005640">
    <property type="component" value="Chromosome 17"/>
</dbReference>
<dbReference type="RNAct" id="Q96JB5">
    <property type="molecule type" value="protein"/>
</dbReference>
<dbReference type="Bgee" id="ENSG00000108465">
    <property type="expression patterns" value="Expressed in pituitary gland and 93 other cell types or tissues"/>
</dbReference>
<dbReference type="ExpressionAtlas" id="Q96JB5">
    <property type="expression patterns" value="baseline and differential"/>
</dbReference>
<dbReference type="GO" id="GO:0005813">
    <property type="term" value="C:centrosome"/>
    <property type="evidence" value="ECO:0000314"/>
    <property type="project" value="UniProtKB"/>
</dbReference>
<dbReference type="GO" id="GO:0005737">
    <property type="term" value="C:cytoplasm"/>
    <property type="evidence" value="ECO:0000314"/>
    <property type="project" value="UniProtKB"/>
</dbReference>
<dbReference type="GO" id="GO:0005829">
    <property type="term" value="C:cytosol"/>
    <property type="evidence" value="ECO:0000314"/>
    <property type="project" value="HPA"/>
</dbReference>
<dbReference type="GO" id="GO:0012505">
    <property type="term" value="C:endomembrane system"/>
    <property type="evidence" value="ECO:0000318"/>
    <property type="project" value="GO_Central"/>
</dbReference>
<dbReference type="GO" id="GO:0005789">
    <property type="term" value="C:endoplasmic reticulum membrane"/>
    <property type="evidence" value="ECO:0000314"/>
    <property type="project" value="UniProtKB"/>
</dbReference>
<dbReference type="GO" id="GO:0043231">
    <property type="term" value="C:intracellular membrane-bounded organelle"/>
    <property type="evidence" value="ECO:0000314"/>
    <property type="project" value="HPA"/>
</dbReference>
<dbReference type="GO" id="GO:0016020">
    <property type="term" value="C:membrane"/>
    <property type="evidence" value="ECO:0007005"/>
    <property type="project" value="UniProtKB"/>
</dbReference>
<dbReference type="GO" id="GO:0005730">
    <property type="term" value="C:nucleolus"/>
    <property type="evidence" value="ECO:0000314"/>
    <property type="project" value="HPA"/>
</dbReference>
<dbReference type="GO" id="GO:0005634">
    <property type="term" value="C:nucleus"/>
    <property type="evidence" value="ECO:0000314"/>
    <property type="project" value="UniProtKB"/>
</dbReference>
<dbReference type="GO" id="GO:0032991">
    <property type="term" value="C:protein-containing complex"/>
    <property type="evidence" value="ECO:0000314"/>
    <property type="project" value="MGI"/>
</dbReference>
<dbReference type="GO" id="GO:0030332">
    <property type="term" value="F:cyclin binding"/>
    <property type="evidence" value="ECO:0000353"/>
    <property type="project" value="UniProtKB"/>
</dbReference>
<dbReference type="GO" id="GO:0097371">
    <property type="term" value="F:MDM2/MDM4 family protein binding"/>
    <property type="evidence" value="ECO:0000353"/>
    <property type="project" value="UniProtKB"/>
</dbReference>
<dbReference type="GO" id="GO:0051019">
    <property type="term" value="F:mitogen-activated protein kinase binding"/>
    <property type="evidence" value="ECO:0000353"/>
    <property type="project" value="UniProtKB"/>
</dbReference>
<dbReference type="GO" id="GO:0051059">
    <property type="term" value="F:NF-kappaB binding"/>
    <property type="evidence" value="ECO:0000353"/>
    <property type="project" value="UniProtKB"/>
</dbReference>
<dbReference type="GO" id="GO:0019901">
    <property type="term" value="F:protein kinase binding"/>
    <property type="evidence" value="ECO:0000353"/>
    <property type="project" value="UniProtKB"/>
</dbReference>
<dbReference type="GO" id="GO:1990756">
    <property type="term" value="F:ubiquitin-like ligase-substrate adaptor activity"/>
    <property type="evidence" value="ECO:0000314"/>
    <property type="project" value="UniProtKB"/>
</dbReference>
<dbReference type="GO" id="GO:0044389">
    <property type="term" value="F:ubiquitin-like protein ligase binding"/>
    <property type="evidence" value="ECO:0000314"/>
    <property type="project" value="MGI"/>
</dbReference>
<dbReference type="GO" id="GO:0030262">
    <property type="term" value="P:apoptotic nuclear changes"/>
    <property type="evidence" value="ECO:0000315"/>
    <property type="project" value="UniProtKB"/>
</dbReference>
<dbReference type="GO" id="GO:0007420">
    <property type="term" value="P:brain development"/>
    <property type="evidence" value="ECO:0000303"/>
    <property type="project" value="UniProtKB"/>
</dbReference>
<dbReference type="GO" id="GO:0008283">
    <property type="term" value="P:cell population proliferation"/>
    <property type="evidence" value="ECO:0000314"/>
    <property type="project" value="UniProtKB"/>
</dbReference>
<dbReference type="GO" id="GO:0060318">
    <property type="term" value="P:definitive erythrocyte differentiation"/>
    <property type="evidence" value="ECO:0000250"/>
    <property type="project" value="UniProtKB"/>
</dbReference>
<dbReference type="GO" id="GO:0030968">
    <property type="term" value="P:endoplasmic reticulum unfolded protein response"/>
    <property type="evidence" value="ECO:0000315"/>
    <property type="project" value="UniProtKB"/>
</dbReference>
<dbReference type="GO" id="GO:0001889">
    <property type="term" value="P:liver development"/>
    <property type="evidence" value="ECO:0000250"/>
    <property type="project" value="UniProtKB"/>
</dbReference>
<dbReference type="GO" id="GO:0007095">
    <property type="term" value="P:mitotic G2 DNA damage checkpoint signaling"/>
    <property type="evidence" value="ECO:0000315"/>
    <property type="project" value="UniProtKB"/>
</dbReference>
<dbReference type="GO" id="GO:0044818">
    <property type="term" value="P:mitotic G2/M transition checkpoint"/>
    <property type="evidence" value="ECO:0000315"/>
    <property type="project" value="UniProtKB"/>
</dbReference>
<dbReference type="GO" id="GO:0043407">
    <property type="term" value="P:negative regulation of MAP kinase activity"/>
    <property type="evidence" value="ECO:0000315"/>
    <property type="project" value="UniProtKB"/>
</dbReference>
<dbReference type="GO" id="GO:0032088">
    <property type="term" value="P:negative regulation of NF-kappaB transcription factor activity"/>
    <property type="evidence" value="ECO:0000315"/>
    <property type="project" value="UniProtKB"/>
</dbReference>
<dbReference type="GO" id="GO:0042177">
    <property type="term" value="P:negative regulation of protein catabolic process"/>
    <property type="evidence" value="ECO:0000314"/>
    <property type="project" value="UniProtKB"/>
</dbReference>
<dbReference type="GO" id="GO:0044387">
    <property type="term" value="P:negative regulation of protein kinase activity by regulation of protein phosphorylation"/>
    <property type="evidence" value="ECO:0000315"/>
    <property type="project" value="UniProtKB"/>
</dbReference>
<dbReference type="GO" id="GO:0001933">
    <property type="term" value="P:negative regulation of protein phosphorylation"/>
    <property type="evidence" value="ECO:0000315"/>
    <property type="project" value="UniProtKB"/>
</dbReference>
<dbReference type="GO" id="GO:0071901">
    <property type="term" value="P:negative regulation of protein serine/threonine kinase activity"/>
    <property type="evidence" value="ECO:0000315"/>
    <property type="project" value="UniProtKB"/>
</dbReference>
<dbReference type="GO" id="GO:1900182">
    <property type="term" value="P:positive regulation of protein localization to nucleus"/>
    <property type="evidence" value="ECO:0000314"/>
    <property type="project" value="UniProtKB"/>
</dbReference>
<dbReference type="GO" id="GO:0031398">
    <property type="term" value="P:positive regulation of protein ubiquitination"/>
    <property type="evidence" value="ECO:0000314"/>
    <property type="project" value="UniProtKB"/>
</dbReference>
<dbReference type="GO" id="GO:0140501">
    <property type="term" value="P:positive regulation of reticulophagy"/>
    <property type="evidence" value="ECO:0000314"/>
    <property type="project" value="UniProtKB"/>
</dbReference>
<dbReference type="GO" id="GO:1901798">
    <property type="term" value="P:positive regulation of signal transduction by p53 class mediator"/>
    <property type="evidence" value="ECO:0000314"/>
    <property type="project" value="UniProtKB"/>
</dbReference>
<dbReference type="GO" id="GO:0045944">
    <property type="term" value="P:positive regulation of transcription by RNA polymerase II"/>
    <property type="evidence" value="ECO:0007669"/>
    <property type="project" value="Ensembl"/>
</dbReference>
<dbReference type="GO" id="GO:0071569">
    <property type="term" value="P:protein ufmylation"/>
    <property type="evidence" value="ECO:0000314"/>
    <property type="project" value="UniProtKB"/>
</dbReference>
<dbReference type="GO" id="GO:0000079">
    <property type="term" value="P:regulation of cyclin-dependent protein serine/threonine kinase activity"/>
    <property type="evidence" value="ECO:0000250"/>
    <property type="project" value="UniProtKB"/>
</dbReference>
<dbReference type="GO" id="GO:0007346">
    <property type="term" value="P:regulation of mitotic cell cycle"/>
    <property type="evidence" value="ECO:0000318"/>
    <property type="project" value="GO_Central"/>
</dbReference>
<dbReference type="GO" id="GO:0045664">
    <property type="term" value="P:regulation of neuron differentiation"/>
    <property type="evidence" value="ECO:0000303"/>
    <property type="project" value="UniProtKB"/>
</dbReference>
<dbReference type="GO" id="GO:0010921">
    <property type="term" value="P:regulation of phosphatase activity"/>
    <property type="evidence" value="ECO:0000315"/>
    <property type="project" value="UniProtKB"/>
</dbReference>
<dbReference type="GO" id="GO:0072344">
    <property type="term" value="P:rescue of stalled ribosome"/>
    <property type="evidence" value="ECO:0000314"/>
    <property type="project" value="UniProtKB"/>
</dbReference>
<dbReference type="GO" id="GO:0034976">
    <property type="term" value="P:response to endoplasmic reticulum stress"/>
    <property type="evidence" value="ECO:0000250"/>
    <property type="project" value="UniProtKB"/>
</dbReference>
<dbReference type="GO" id="GO:0032790">
    <property type="term" value="P:ribosome disassembly"/>
    <property type="evidence" value="ECO:0000314"/>
    <property type="project" value="UniProtKB"/>
</dbReference>
<dbReference type="InterPro" id="IPR008491">
    <property type="entry name" value="CDK5RAP3"/>
</dbReference>
<dbReference type="PANTHER" id="PTHR14894">
    <property type="entry name" value="CDK5 REGULATORY SUBUNIT-ASSOCIATED PROTEIN 3"/>
    <property type="match status" value="1"/>
</dbReference>
<dbReference type="PANTHER" id="PTHR14894:SF0">
    <property type="entry name" value="CDK5 REGULATORY SUBUNIT-ASSOCIATED PROTEIN 3"/>
    <property type="match status" value="1"/>
</dbReference>
<dbReference type="Pfam" id="PF05600">
    <property type="entry name" value="CDK5RAP3"/>
    <property type="match status" value="1"/>
</dbReference>
<sequence>MEDHQHVPIDIQTSKLLDWLVDRRHCSLKWQSLVLTIREKINAAIQDMPESEEIAQLLSGSYIHYFHCLRILDLLKGTEASTKNIFGRYSSQRMKDWQEIIALYEKDNTYLVELSSLLVRNVNYEIPSLKKQIAKCQQLQQEYSRKEEECQAGAAEMREQFYHSCKQYGITGENVRGELLALVKDLPSQLAEIGAAAQQSLGEAIDVYQASVGFVCESPTEQVLPMLRFVQKRGNSTVYEWRTGTEPSVVERPHLEELPEQVAEDAIDWGDFGVEAVSEGTDSGISAEAAGIDWGIFPESDSKDPGGDGIDWGDDAVALQITVLEAGTQAPEGVARGPDALTLLEYTETRNQFLDELMELEIFLAQRAVELSEEADVLSVSQFQLAPAILQGQTKEKMVTMVSVLEDLIGKLTSLQLQHLFMILASPRYVDRVTEFLQQKLKQSQLLALKKELMVQKQQEALEEQAALEPKLDLLLEKTKELQKLIEADISKRYSGRPVNLMGTSL</sequence>
<gene>
    <name evidence="29 33" type="primary">CDK5RAP3</name>
    <name evidence="28" type="synonym">IC53</name>
    <name evidence="28" type="synonym">LZAP</name>
    <name type="ORF">MSTP016</name>
    <name type="ORF">OK/SW-cl.114</name>
    <name type="ORF">PP1553</name>
</gene>
<feature type="chain" id="PRO_0000220516" description="CDK5 regulatory subunit-associated protein 3">
    <location>
        <begin position="1"/>
        <end position="506"/>
    </location>
</feature>
<feature type="region of interest" description="Required for interaction with UFL1 and mediates interaction with CHEK1" evidence="9 11">
    <location>
        <begin position="269"/>
        <end position="506"/>
    </location>
</feature>
<feature type="region of interest" description="RPL10a-binding domain (RBD)" evidence="24">
    <location>
        <begin position="355"/>
        <end position="370"/>
    </location>
</feature>
<feature type="short sequence motif" description="Shuffled ATG8-binding motif 1" evidence="18 21">
    <location>
        <begin position="267"/>
        <end position="270"/>
    </location>
</feature>
<feature type="short sequence motif" description="Shuffled ATG8-binding motif 2" evidence="18 21">
    <location>
        <begin position="292"/>
        <end position="295"/>
    </location>
</feature>
<feature type="short sequence motif" description="Shuffled ATG8-binding motif 3" evidence="18 21">
    <location>
        <begin position="310"/>
        <end position="313"/>
    </location>
</feature>
<feature type="cross-link" description="Glycyl lysine isopeptide (Lys-Gly) (interchain with G-Cter in SUMO2)" evidence="38">
    <location>
        <position position="450"/>
    </location>
</feature>
<feature type="splice variant" id="VSP_007568" description="In isoform 3." evidence="26">
    <location>
        <begin position="1"/>
        <end position="225"/>
    </location>
</feature>
<feature type="splice variant" id="VSP_007566" description="In isoform 2." evidence="25">
    <location>
        <begin position="1"/>
        <end position="87"/>
    </location>
</feature>
<feature type="splice variant" id="VSP_055646" description="In isoform 4." evidence="27">
    <original>ME</original>
    <variation>MRRQSMTSATRDLHTALDGKATQGGKK</variation>
    <location>
        <begin position="1"/>
        <end position="2"/>
    </location>
</feature>
<feature type="splice variant" id="VSP_007567" description="In isoform 2." evidence="25">
    <original>RYSSQRMKDWQEIIALYEKDNTYL</original>
    <variation>MCVHPGACLPHVGVSWAEFPGHFS</variation>
    <location>
        <begin position="88"/>
        <end position="111"/>
    </location>
</feature>
<feature type="sequence variant" id="VAR_048688" description="In dbSNP:rs35054799.">
    <original>L</original>
    <variation>V</variation>
    <location>
        <position position="324"/>
    </location>
</feature>
<feature type="mutagenesis site" description="Abolished interaction with UFL1; when associated with A-355, A-359, A-373 and A-432." evidence="22">
    <original>E</original>
    <variation>A</variation>
    <location>
        <position position="217"/>
    </location>
</feature>
<feature type="mutagenesis site" description="Alters cleavage by CASP3 in vitro. Prevents apoptosis-induced cleavage in vivo; when associated with E-282 and E-311." evidence="16">
    <original>D</original>
    <variation>E</variation>
    <location>
        <position position="268"/>
    </location>
</feature>
<feature type="mutagenesis site" description="Abolished interaction with ATG8 family proteins; when associated with A-294 and A-312." evidence="20 21">
    <original>W</original>
    <variation>A</variation>
    <location>
        <position position="269"/>
    </location>
</feature>
<feature type="mutagenesis site" description="Alters cleavage by CASP3 in vitro. Prevents apoptosis-induced cleavage in vivo; when associated with E-268 and E-311." evidence="16">
    <original>D</original>
    <variation>E</variation>
    <location>
        <position position="282"/>
    </location>
</feature>
<feature type="mutagenesis site" description="Abolished interaction with ATG8 family proteins; when associated with A-269 and A-312." evidence="20 21">
    <original>W</original>
    <variation>A</variation>
    <location>
        <position position="294"/>
    </location>
</feature>
<feature type="mutagenesis site" description="Alters cleavage by CASP3 in vitro. Prevents apoptosis-induced cleavage in vivo; when associated with E-268 and E-282." evidence="16">
    <original>D</original>
    <variation>E</variation>
    <location>
        <position position="311"/>
    </location>
</feature>
<feature type="mutagenesis site" description="Abolished interaction with ATG8 family proteins; when associated with A-269 and A-294." evidence="20 21">
    <original>W</original>
    <variation>A</variation>
    <location>
        <position position="312"/>
    </location>
</feature>
<feature type="mutagenesis site" description="Abolished interaction with UFL1; when associated with A-355, A-359, A-373 and A-432." evidence="22">
    <original>D</original>
    <variation>A</variation>
    <location>
        <position position="355"/>
    </location>
</feature>
<feature type="mutagenesis site" description="Abolished interaction with UFL1; when associated with A-217, A-355, A-373 and A-432." evidence="22">
    <original>E</original>
    <variation>A</variation>
    <location>
        <position position="359"/>
    </location>
</feature>
<feature type="mutagenesis site" description="Abolished interaction with UFL1; when associated with A-217, A-355, A-359 and A-432." evidence="22">
    <original>E</original>
    <variation>A</variation>
    <location>
        <position position="373"/>
    </location>
</feature>
<feature type="mutagenesis site" description="Abolished interaction with UFL1; when associated with A-217, A-355, A-359 and A-373." evidence="22">
    <original>R</original>
    <variation>A</variation>
    <location>
        <position position="432"/>
    </location>
</feature>
<feature type="sequence conflict" description="In Ref. 5; BAH13320." evidence="30" ref="5">
    <original>Q</original>
    <variation>R</variation>
    <location>
        <position position="98"/>
    </location>
</feature>
<feature type="sequence conflict" description="In Ref. 6; BAD97107." evidence="30" ref="6">
    <original>E</original>
    <variation>V</variation>
    <location>
        <position position="113"/>
    </location>
</feature>
<feature type="sequence conflict" description="In Ref. 3; AAK69655." evidence="30" ref="3">
    <original>E</original>
    <variation>K</variation>
    <location>
        <position position="406"/>
    </location>
</feature>
<feature type="sequence conflict" description="In Ref. 6; BAD97107." evidence="30" ref="6">
    <original>Q</original>
    <variation>E</variation>
    <location>
        <position position="443"/>
    </location>
</feature>
<feature type="sequence conflict" description="In Ref. 5; BAH13320." evidence="30" ref="5">
    <original>T</original>
    <variation>A</variation>
    <location>
        <position position="479"/>
    </location>
</feature>
<feature type="strand" evidence="39">
    <location>
        <begin position="9"/>
        <end position="12"/>
    </location>
</feature>
<feature type="helix" evidence="39">
    <location>
        <begin position="13"/>
        <end position="15"/>
    </location>
</feature>
<feature type="helix" evidence="39">
    <location>
        <begin position="16"/>
        <end position="22"/>
    </location>
</feature>
<feature type="helix" evidence="39">
    <location>
        <begin position="30"/>
        <end position="46"/>
    </location>
</feature>
<feature type="helix" evidence="39">
    <location>
        <begin position="65"/>
        <end position="78"/>
    </location>
</feature>
<feature type="helix" evidence="39">
    <location>
        <begin position="92"/>
        <end position="105"/>
    </location>
</feature>
<feature type="helix" evidence="39">
    <location>
        <begin position="106"/>
        <end position="108"/>
    </location>
</feature>
<feature type="helix" evidence="39">
    <location>
        <begin position="109"/>
        <end position="124"/>
    </location>
</feature>
<feature type="helix" evidence="39">
    <location>
        <begin position="126"/>
        <end position="167"/>
    </location>
</feature>
<feature type="helix" evidence="39">
    <location>
        <begin position="175"/>
        <end position="184"/>
    </location>
</feature>
<feature type="helix" evidence="39">
    <location>
        <begin position="189"/>
        <end position="198"/>
    </location>
</feature>
<feature type="helix" evidence="39">
    <location>
        <begin position="202"/>
        <end position="215"/>
    </location>
</feature>
<feature type="helix" evidence="39">
    <location>
        <begin position="225"/>
        <end position="232"/>
    </location>
</feature>
<feature type="helix" evidence="39">
    <location>
        <begin position="238"/>
        <end position="242"/>
    </location>
</feature>
<feature type="turn" evidence="39">
    <location>
        <begin position="343"/>
        <end position="345"/>
    </location>
</feature>
<feature type="helix" evidence="39">
    <location>
        <begin position="347"/>
        <end position="372"/>
    </location>
</feature>
<feature type="helix" evidence="39">
    <location>
        <begin position="377"/>
        <end position="382"/>
    </location>
</feature>
<feature type="turn" evidence="39">
    <location>
        <begin position="388"/>
        <end position="390"/>
    </location>
</feature>
<feature type="helix" evidence="39">
    <location>
        <begin position="395"/>
        <end position="417"/>
    </location>
</feature>
<feature type="helix" evidence="39">
    <location>
        <begin position="420"/>
        <end position="424"/>
    </location>
</feature>
<feature type="helix" evidence="39">
    <location>
        <begin position="428"/>
        <end position="468"/>
    </location>
</feature>
<feature type="helix" evidence="39">
    <location>
        <begin position="470"/>
        <end position="493"/>
    </location>
</feature>
<feature type="turn" evidence="39">
    <location>
        <begin position="494"/>
        <end position="496"/>
    </location>
</feature>
<feature type="strand" evidence="39">
    <location>
        <begin position="499"/>
        <end position="502"/>
    </location>
</feature>